<protein>
    <recommendedName>
        <fullName evidence="1">Phosphate import ATP-binding protein PstB 1</fullName>
        <ecNumber evidence="1">7.3.2.1</ecNumber>
    </recommendedName>
    <alternativeName>
        <fullName evidence="1">ABC phosphate transporter 1</fullName>
    </alternativeName>
    <alternativeName>
        <fullName evidence="1">Phosphate-transporting ATPase 1</fullName>
    </alternativeName>
</protein>
<proteinExistence type="inferred from homology"/>
<dbReference type="EC" id="7.3.2.1" evidence="1"/>
<dbReference type="EMBL" id="AE016853">
    <property type="protein sequence ID" value="AAO56744.1"/>
    <property type="molecule type" value="Genomic_DNA"/>
</dbReference>
<dbReference type="RefSeq" id="NP_793049.1">
    <property type="nucleotide sequence ID" value="NC_004578.1"/>
</dbReference>
<dbReference type="SMR" id="Q880A6"/>
<dbReference type="STRING" id="223283.PSPTO_3266"/>
<dbReference type="KEGG" id="pst:PSPTO_3266"/>
<dbReference type="PATRIC" id="fig|223283.9.peg.3340"/>
<dbReference type="eggNOG" id="COG1117">
    <property type="taxonomic scope" value="Bacteria"/>
</dbReference>
<dbReference type="HOGENOM" id="CLU_000604_1_22_6"/>
<dbReference type="OrthoDB" id="9802264at2"/>
<dbReference type="PhylomeDB" id="Q880A6"/>
<dbReference type="Proteomes" id="UP000002515">
    <property type="component" value="Chromosome"/>
</dbReference>
<dbReference type="GO" id="GO:0005886">
    <property type="term" value="C:plasma membrane"/>
    <property type="evidence" value="ECO:0007669"/>
    <property type="project" value="UniProtKB-SubCell"/>
</dbReference>
<dbReference type="GO" id="GO:0005524">
    <property type="term" value="F:ATP binding"/>
    <property type="evidence" value="ECO:0007669"/>
    <property type="project" value="UniProtKB-KW"/>
</dbReference>
<dbReference type="GO" id="GO:0016887">
    <property type="term" value="F:ATP hydrolysis activity"/>
    <property type="evidence" value="ECO:0007669"/>
    <property type="project" value="InterPro"/>
</dbReference>
<dbReference type="GO" id="GO:0015415">
    <property type="term" value="F:ATPase-coupled phosphate ion transmembrane transporter activity"/>
    <property type="evidence" value="ECO:0007669"/>
    <property type="project" value="UniProtKB-EC"/>
</dbReference>
<dbReference type="GO" id="GO:0035435">
    <property type="term" value="P:phosphate ion transmembrane transport"/>
    <property type="evidence" value="ECO:0007669"/>
    <property type="project" value="InterPro"/>
</dbReference>
<dbReference type="CDD" id="cd03260">
    <property type="entry name" value="ABC_PstB_phosphate_transporter"/>
    <property type="match status" value="1"/>
</dbReference>
<dbReference type="FunFam" id="3.40.50.300:FF:000132">
    <property type="entry name" value="Phosphate import ATP-binding protein PstB"/>
    <property type="match status" value="1"/>
</dbReference>
<dbReference type="Gene3D" id="3.40.50.300">
    <property type="entry name" value="P-loop containing nucleotide triphosphate hydrolases"/>
    <property type="match status" value="1"/>
</dbReference>
<dbReference type="InterPro" id="IPR003593">
    <property type="entry name" value="AAA+_ATPase"/>
</dbReference>
<dbReference type="InterPro" id="IPR003439">
    <property type="entry name" value="ABC_transporter-like_ATP-bd"/>
</dbReference>
<dbReference type="InterPro" id="IPR017871">
    <property type="entry name" value="ABC_transporter-like_CS"/>
</dbReference>
<dbReference type="InterPro" id="IPR027417">
    <property type="entry name" value="P-loop_NTPase"/>
</dbReference>
<dbReference type="InterPro" id="IPR005670">
    <property type="entry name" value="PstB-like"/>
</dbReference>
<dbReference type="NCBIfam" id="TIGR00972">
    <property type="entry name" value="3a0107s01c2"/>
    <property type="match status" value="1"/>
</dbReference>
<dbReference type="PANTHER" id="PTHR43423">
    <property type="entry name" value="ABC TRANSPORTER I FAMILY MEMBER 17"/>
    <property type="match status" value="1"/>
</dbReference>
<dbReference type="PANTHER" id="PTHR43423:SF3">
    <property type="entry name" value="PHOSPHATE IMPORT ATP-BINDING PROTEIN PSTB"/>
    <property type="match status" value="1"/>
</dbReference>
<dbReference type="Pfam" id="PF00005">
    <property type="entry name" value="ABC_tran"/>
    <property type="match status" value="1"/>
</dbReference>
<dbReference type="SMART" id="SM00382">
    <property type="entry name" value="AAA"/>
    <property type="match status" value="1"/>
</dbReference>
<dbReference type="SUPFAM" id="SSF52540">
    <property type="entry name" value="P-loop containing nucleoside triphosphate hydrolases"/>
    <property type="match status" value="1"/>
</dbReference>
<dbReference type="PROSITE" id="PS00211">
    <property type="entry name" value="ABC_TRANSPORTER_1"/>
    <property type="match status" value="1"/>
</dbReference>
<dbReference type="PROSITE" id="PS50893">
    <property type="entry name" value="ABC_TRANSPORTER_2"/>
    <property type="match status" value="1"/>
</dbReference>
<dbReference type="PROSITE" id="PS51238">
    <property type="entry name" value="PSTB"/>
    <property type="match status" value="1"/>
</dbReference>
<organism>
    <name type="scientific">Pseudomonas syringae pv. tomato (strain ATCC BAA-871 / DC3000)</name>
    <dbReference type="NCBI Taxonomy" id="223283"/>
    <lineage>
        <taxon>Bacteria</taxon>
        <taxon>Pseudomonadati</taxon>
        <taxon>Pseudomonadota</taxon>
        <taxon>Gammaproteobacteria</taxon>
        <taxon>Pseudomonadales</taxon>
        <taxon>Pseudomonadaceae</taxon>
        <taxon>Pseudomonas</taxon>
    </lineage>
</organism>
<name>PSTB1_PSESM</name>
<gene>
    <name evidence="1" type="primary">pstB1</name>
    <name type="synonym">pstB-1</name>
    <name type="ordered locus">PSPTO_3266</name>
</gene>
<sequence>MNNLSLANEKTKIQVRGLEFFYNNQKSLKSIDMTIPEKRITAIIGPSGCGKSTLLRVFNRIYAMYPKQEARGEVLLNGENILAPGYSMNRLRSHVGMVFQKPVPFPMSIYDNISYAIKHHEKLSRREMEDRVEQALRGAALWDEVKDKLKQSATGLSGGQQQRLCIARTIALRPQVLLLDEPTSALDPISTGRIEQLITELKEQFTVIIVTHNMQQAARCSDYTAFMFMGELIEHGDTDTIFTKPSKTQTEDYITGRFG</sequence>
<comment type="function">
    <text evidence="1">Part of the ABC transporter complex PstSACB involved in phosphate import. Responsible for energy coupling to the transport system.</text>
</comment>
<comment type="catalytic activity">
    <reaction evidence="1">
        <text>phosphate(out) + ATP + H2O = ADP + 2 phosphate(in) + H(+)</text>
        <dbReference type="Rhea" id="RHEA:24440"/>
        <dbReference type="ChEBI" id="CHEBI:15377"/>
        <dbReference type="ChEBI" id="CHEBI:15378"/>
        <dbReference type="ChEBI" id="CHEBI:30616"/>
        <dbReference type="ChEBI" id="CHEBI:43474"/>
        <dbReference type="ChEBI" id="CHEBI:456216"/>
        <dbReference type="EC" id="7.3.2.1"/>
    </reaction>
</comment>
<comment type="subunit">
    <text evidence="1">The complex is composed of two ATP-binding proteins (PstB), two transmembrane proteins (PstC and PstA) and a solute-binding protein (PstS).</text>
</comment>
<comment type="subcellular location">
    <subcellularLocation>
        <location evidence="1">Cell inner membrane</location>
        <topology evidence="1">Peripheral membrane protein</topology>
    </subcellularLocation>
</comment>
<comment type="similarity">
    <text evidence="1">Belongs to the ABC transporter superfamily. Phosphate importer (TC 3.A.1.7) family.</text>
</comment>
<keyword id="KW-0067">ATP-binding</keyword>
<keyword id="KW-0997">Cell inner membrane</keyword>
<keyword id="KW-1003">Cell membrane</keyword>
<keyword id="KW-0472">Membrane</keyword>
<keyword id="KW-0547">Nucleotide-binding</keyword>
<keyword id="KW-0592">Phosphate transport</keyword>
<keyword id="KW-1185">Reference proteome</keyword>
<keyword id="KW-1278">Translocase</keyword>
<keyword id="KW-0813">Transport</keyword>
<feature type="chain" id="PRO_0000092865" description="Phosphate import ATP-binding protein PstB 1">
    <location>
        <begin position="1"/>
        <end position="259"/>
    </location>
</feature>
<feature type="domain" description="ABC transporter" evidence="1">
    <location>
        <begin position="13"/>
        <end position="254"/>
    </location>
</feature>
<feature type="binding site" evidence="1">
    <location>
        <begin position="45"/>
        <end position="52"/>
    </location>
    <ligand>
        <name>ATP</name>
        <dbReference type="ChEBI" id="CHEBI:30616"/>
    </ligand>
</feature>
<evidence type="ECO:0000255" key="1">
    <source>
        <dbReference type="HAMAP-Rule" id="MF_01702"/>
    </source>
</evidence>
<accession>Q880A6</accession>
<reference key="1">
    <citation type="journal article" date="2003" name="Proc. Natl. Acad. Sci. U.S.A.">
        <title>The complete genome sequence of the Arabidopsis and tomato pathogen Pseudomonas syringae pv. tomato DC3000.</title>
        <authorList>
            <person name="Buell C.R."/>
            <person name="Joardar V."/>
            <person name="Lindeberg M."/>
            <person name="Selengut J."/>
            <person name="Paulsen I.T."/>
            <person name="Gwinn M.L."/>
            <person name="Dodson R.J."/>
            <person name="DeBoy R.T."/>
            <person name="Durkin A.S."/>
            <person name="Kolonay J.F."/>
            <person name="Madupu R."/>
            <person name="Daugherty S.C."/>
            <person name="Brinkac L.M."/>
            <person name="Beanan M.J."/>
            <person name="Haft D.H."/>
            <person name="Nelson W.C."/>
            <person name="Davidsen T.M."/>
            <person name="Zafar N."/>
            <person name="Zhou L."/>
            <person name="Liu J."/>
            <person name="Yuan Q."/>
            <person name="Khouri H.M."/>
            <person name="Fedorova N.B."/>
            <person name="Tran B."/>
            <person name="Russell D."/>
            <person name="Berry K.J."/>
            <person name="Utterback T.R."/>
            <person name="Van Aken S.E."/>
            <person name="Feldblyum T.V."/>
            <person name="D'Ascenzo M."/>
            <person name="Deng W.-L."/>
            <person name="Ramos A.R."/>
            <person name="Alfano J.R."/>
            <person name="Cartinhour S."/>
            <person name="Chatterjee A.K."/>
            <person name="Delaney T.P."/>
            <person name="Lazarowitz S.G."/>
            <person name="Martin G.B."/>
            <person name="Schneider D.J."/>
            <person name="Tang X."/>
            <person name="Bender C.L."/>
            <person name="White O."/>
            <person name="Fraser C.M."/>
            <person name="Collmer A."/>
        </authorList>
    </citation>
    <scope>NUCLEOTIDE SEQUENCE [LARGE SCALE GENOMIC DNA]</scope>
    <source>
        <strain>ATCC BAA-871 / DC3000</strain>
    </source>
</reference>